<keyword id="KW-0067">ATP-binding</keyword>
<keyword id="KW-0119">Carbohydrate metabolism</keyword>
<keyword id="KW-0963">Cytoplasm</keyword>
<keyword id="KW-0299">Galactose metabolism</keyword>
<keyword id="KW-0418">Kinase</keyword>
<keyword id="KW-0460">Magnesium</keyword>
<keyword id="KW-0479">Metal-binding</keyword>
<keyword id="KW-0547">Nucleotide-binding</keyword>
<keyword id="KW-0808">Transferase</keyword>
<dbReference type="EC" id="2.7.1.6" evidence="1"/>
<dbReference type="EMBL" id="CP000246">
    <property type="protein sequence ID" value="ABG84966.1"/>
    <property type="molecule type" value="Genomic_DNA"/>
</dbReference>
<dbReference type="RefSeq" id="WP_003465923.1">
    <property type="nucleotide sequence ID" value="NC_008261.1"/>
</dbReference>
<dbReference type="SMR" id="Q0TQU5"/>
<dbReference type="STRING" id="195103.CPF_1552"/>
<dbReference type="PaxDb" id="195103-CPF_1552"/>
<dbReference type="KEGG" id="cpf:CPF_1552"/>
<dbReference type="eggNOG" id="COG0153">
    <property type="taxonomic scope" value="Bacteria"/>
</dbReference>
<dbReference type="HOGENOM" id="CLU_017814_2_1_9"/>
<dbReference type="UniPathway" id="UPA00214"/>
<dbReference type="Proteomes" id="UP000001823">
    <property type="component" value="Chromosome"/>
</dbReference>
<dbReference type="GO" id="GO:0005829">
    <property type="term" value="C:cytosol"/>
    <property type="evidence" value="ECO:0007669"/>
    <property type="project" value="TreeGrafter"/>
</dbReference>
<dbReference type="GO" id="GO:0005524">
    <property type="term" value="F:ATP binding"/>
    <property type="evidence" value="ECO:0007669"/>
    <property type="project" value="UniProtKB-UniRule"/>
</dbReference>
<dbReference type="GO" id="GO:0004335">
    <property type="term" value="F:galactokinase activity"/>
    <property type="evidence" value="ECO:0007669"/>
    <property type="project" value="UniProtKB-UniRule"/>
</dbReference>
<dbReference type="GO" id="GO:0000287">
    <property type="term" value="F:magnesium ion binding"/>
    <property type="evidence" value="ECO:0007669"/>
    <property type="project" value="UniProtKB-UniRule"/>
</dbReference>
<dbReference type="GO" id="GO:0006012">
    <property type="term" value="P:galactose metabolic process"/>
    <property type="evidence" value="ECO:0007669"/>
    <property type="project" value="UniProtKB-UniRule"/>
</dbReference>
<dbReference type="FunFam" id="3.30.230.10:FF:000017">
    <property type="entry name" value="Galactokinase"/>
    <property type="match status" value="1"/>
</dbReference>
<dbReference type="FunFam" id="3.30.70.890:FF:000001">
    <property type="entry name" value="Galactokinase"/>
    <property type="match status" value="1"/>
</dbReference>
<dbReference type="Gene3D" id="3.30.230.10">
    <property type="match status" value="1"/>
</dbReference>
<dbReference type="Gene3D" id="3.30.70.890">
    <property type="entry name" value="GHMP kinase, C-terminal domain"/>
    <property type="match status" value="1"/>
</dbReference>
<dbReference type="HAMAP" id="MF_00246">
    <property type="entry name" value="Galactokinase"/>
    <property type="match status" value="1"/>
</dbReference>
<dbReference type="InterPro" id="IPR000705">
    <property type="entry name" value="Galactokinase"/>
</dbReference>
<dbReference type="InterPro" id="IPR022963">
    <property type="entry name" value="Galactokinase_bac"/>
</dbReference>
<dbReference type="InterPro" id="IPR019741">
    <property type="entry name" value="Galactokinase_CS"/>
</dbReference>
<dbReference type="InterPro" id="IPR019539">
    <property type="entry name" value="GalKase_N"/>
</dbReference>
<dbReference type="InterPro" id="IPR013750">
    <property type="entry name" value="GHMP_kinase_C_dom"/>
</dbReference>
<dbReference type="InterPro" id="IPR036554">
    <property type="entry name" value="GHMP_kinase_C_sf"/>
</dbReference>
<dbReference type="InterPro" id="IPR006204">
    <property type="entry name" value="GHMP_kinase_N_dom"/>
</dbReference>
<dbReference type="InterPro" id="IPR006203">
    <property type="entry name" value="GHMP_knse_ATP-bd_CS"/>
</dbReference>
<dbReference type="InterPro" id="IPR006206">
    <property type="entry name" value="Mevalonate/galactokinase"/>
</dbReference>
<dbReference type="InterPro" id="IPR020568">
    <property type="entry name" value="Ribosomal_Su5_D2-typ_SF"/>
</dbReference>
<dbReference type="InterPro" id="IPR014721">
    <property type="entry name" value="Ribsml_uS5_D2-typ_fold_subgr"/>
</dbReference>
<dbReference type="NCBIfam" id="TIGR00131">
    <property type="entry name" value="gal_kin"/>
    <property type="match status" value="1"/>
</dbReference>
<dbReference type="NCBIfam" id="NF003705">
    <property type="entry name" value="PRK05322.1"/>
    <property type="match status" value="1"/>
</dbReference>
<dbReference type="PANTHER" id="PTHR10457:SF7">
    <property type="entry name" value="GALACTOKINASE-RELATED"/>
    <property type="match status" value="1"/>
</dbReference>
<dbReference type="PANTHER" id="PTHR10457">
    <property type="entry name" value="MEVALONATE KINASE/GALACTOKINASE"/>
    <property type="match status" value="1"/>
</dbReference>
<dbReference type="Pfam" id="PF10509">
    <property type="entry name" value="GalKase_gal_bdg"/>
    <property type="match status" value="1"/>
</dbReference>
<dbReference type="Pfam" id="PF08544">
    <property type="entry name" value="GHMP_kinases_C"/>
    <property type="match status" value="1"/>
</dbReference>
<dbReference type="Pfam" id="PF00288">
    <property type="entry name" value="GHMP_kinases_N"/>
    <property type="match status" value="1"/>
</dbReference>
<dbReference type="PIRSF" id="PIRSF000530">
    <property type="entry name" value="Galactokinase"/>
    <property type="match status" value="1"/>
</dbReference>
<dbReference type="PRINTS" id="PR00473">
    <property type="entry name" value="GALCTOKINASE"/>
</dbReference>
<dbReference type="PRINTS" id="PR00959">
    <property type="entry name" value="MEVGALKINASE"/>
</dbReference>
<dbReference type="SUPFAM" id="SSF55060">
    <property type="entry name" value="GHMP Kinase, C-terminal domain"/>
    <property type="match status" value="1"/>
</dbReference>
<dbReference type="SUPFAM" id="SSF54211">
    <property type="entry name" value="Ribosomal protein S5 domain 2-like"/>
    <property type="match status" value="1"/>
</dbReference>
<dbReference type="PROSITE" id="PS00106">
    <property type="entry name" value="GALACTOKINASE"/>
    <property type="match status" value="1"/>
</dbReference>
<dbReference type="PROSITE" id="PS00627">
    <property type="entry name" value="GHMP_KINASES_ATP"/>
    <property type="match status" value="1"/>
</dbReference>
<gene>
    <name evidence="1" type="primary">galK</name>
    <name type="ordered locus">CPF_1552</name>
</gene>
<feature type="chain" id="PRO_1000005746" description="Galactokinase">
    <location>
        <begin position="1"/>
        <end position="387"/>
    </location>
</feature>
<feature type="active site" description="Proton acceptor" evidence="1">
    <location>
        <position position="174"/>
    </location>
</feature>
<feature type="binding site" evidence="1">
    <location>
        <begin position="33"/>
        <end position="36"/>
    </location>
    <ligand>
        <name>substrate</name>
    </ligand>
</feature>
<feature type="binding site" evidence="1">
    <location>
        <position position="67"/>
    </location>
    <ligand>
        <name>ATP</name>
        <dbReference type="ChEBI" id="CHEBI:30616"/>
    </ligand>
</feature>
<feature type="binding site" evidence="1">
    <location>
        <begin position="124"/>
        <end position="130"/>
    </location>
    <ligand>
        <name>ATP</name>
        <dbReference type="ChEBI" id="CHEBI:30616"/>
    </ligand>
</feature>
<feature type="binding site" evidence="1">
    <location>
        <position position="130"/>
    </location>
    <ligand>
        <name>Mg(2+)</name>
        <dbReference type="ChEBI" id="CHEBI:18420"/>
    </ligand>
</feature>
<feature type="binding site" evidence="1">
    <location>
        <position position="162"/>
    </location>
    <ligand>
        <name>Mg(2+)</name>
        <dbReference type="ChEBI" id="CHEBI:18420"/>
    </ligand>
</feature>
<feature type="binding site" evidence="1">
    <location>
        <position position="224"/>
    </location>
    <ligand>
        <name>substrate</name>
    </ligand>
</feature>
<feature type="site" description="Transition state stabilizer" evidence="1">
    <location>
        <position position="27"/>
    </location>
</feature>
<accession>Q0TQU5</accession>
<comment type="function">
    <text evidence="1">Catalyzes the transfer of the gamma-phosphate of ATP to D-galactose to form alpha-D-galactose-1-phosphate (Gal-1-P).</text>
</comment>
<comment type="catalytic activity">
    <reaction evidence="1">
        <text>alpha-D-galactose + ATP = alpha-D-galactose 1-phosphate + ADP + H(+)</text>
        <dbReference type="Rhea" id="RHEA:13553"/>
        <dbReference type="ChEBI" id="CHEBI:15378"/>
        <dbReference type="ChEBI" id="CHEBI:28061"/>
        <dbReference type="ChEBI" id="CHEBI:30616"/>
        <dbReference type="ChEBI" id="CHEBI:58336"/>
        <dbReference type="ChEBI" id="CHEBI:456216"/>
        <dbReference type="EC" id="2.7.1.6"/>
    </reaction>
</comment>
<comment type="pathway">
    <text evidence="1">Carbohydrate metabolism; galactose metabolism.</text>
</comment>
<comment type="subcellular location">
    <subcellularLocation>
        <location evidence="1">Cytoplasm</location>
    </subcellularLocation>
</comment>
<comment type="similarity">
    <text evidence="1">Belongs to the GHMP kinase family. GalK subfamily.</text>
</comment>
<protein>
    <recommendedName>
        <fullName evidence="1">Galactokinase</fullName>
        <ecNumber evidence="1">2.7.1.6</ecNumber>
    </recommendedName>
    <alternativeName>
        <fullName evidence="1">Galactose kinase</fullName>
    </alternativeName>
</protein>
<organism>
    <name type="scientific">Clostridium perfringens (strain ATCC 13124 / DSM 756 / JCM 1290 / NCIMB 6125 / NCTC 8237 / Type A)</name>
    <dbReference type="NCBI Taxonomy" id="195103"/>
    <lineage>
        <taxon>Bacteria</taxon>
        <taxon>Bacillati</taxon>
        <taxon>Bacillota</taxon>
        <taxon>Clostridia</taxon>
        <taxon>Eubacteriales</taxon>
        <taxon>Clostridiaceae</taxon>
        <taxon>Clostridium</taxon>
    </lineage>
</organism>
<sequence length="387" mass="43004">MELNTLKSTFINNFGKEPTSLFFSPGRINLIGEHIDYNGGFVFPCPITLGTFAAASLREDRICRAYSLNFESLGVIEFSLDDLSYKKEDNWTNYLKGVLKVLIEKGYKIDKGIDLVINGNLPNGAGLSSSASLEMLIVKILDTFFSLNISKVDAALIGKEVENTYIGVNSGIMDQFAISLGEKDKAILLDCNSLYYEYVPLNLGDNSIIIMNTNKRRELADSKYNERRKECDDSLDTLKKYTNISSLCELTSLEFETYKDKIEDSNKLRRCVHAISENERVKDAVKALKENNLELFGQLMNQSHISLRDDYEVTGKELDTLAENAWKQPGVLGARMTGAGFGGCAIAIVNNAHVDEFIKNVGQAYKDAIGYEASFYVASIGNGPTEL</sequence>
<reference key="1">
    <citation type="journal article" date="2006" name="Genome Res.">
        <title>Skewed genomic variability in strains of the toxigenic bacterial pathogen, Clostridium perfringens.</title>
        <authorList>
            <person name="Myers G.S.A."/>
            <person name="Rasko D.A."/>
            <person name="Cheung J.K."/>
            <person name="Ravel J."/>
            <person name="Seshadri R."/>
            <person name="DeBoy R.T."/>
            <person name="Ren Q."/>
            <person name="Varga J."/>
            <person name="Awad M.M."/>
            <person name="Brinkac L.M."/>
            <person name="Daugherty S.C."/>
            <person name="Haft D.H."/>
            <person name="Dodson R.J."/>
            <person name="Madupu R."/>
            <person name="Nelson W.C."/>
            <person name="Rosovitz M.J."/>
            <person name="Sullivan S.A."/>
            <person name="Khouri H."/>
            <person name="Dimitrov G.I."/>
            <person name="Watkins K.L."/>
            <person name="Mulligan S."/>
            <person name="Benton J."/>
            <person name="Radune D."/>
            <person name="Fisher D.J."/>
            <person name="Atkins H.S."/>
            <person name="Hiscox T."/>
            <person name="Jost B.H."/>
            <person name="Billington S.J."/>
            <person name="Songer J.G."/>
            <person name="McClane B.A."/>
            <person name="Titball R.W."/>
            <person name="Rood J.I."/>
            <person name="Melville S.B."/>
            <person name="Paulsen I.T."/>
        </authorList>
    </citation>
    <scope>NUCLEOTIDE SEQUENCE [LARGE SCALE GENOMIC DNA]</scope>
    <source>
        <strain>ATCC 13124 / DSM 756 / JCM 1290 / NCIMB 6125 / NCTC 8237 / S 107 / Type A</strain>
    </source>
</reference>
<proteinExistence type="inferred from homology"/>
<evidence type="ECO:0000255" key="1">
    <source>
        <dbReference type="HAMAP-Rule" id="MF_00246"/>
    </source>
</evidence>
<name>GAL1_CLOP1</name>